<keyword id="KW-0028">Amino-acid biosynthesis</keyword>
<keyword id="KW-0055">Arginine biosynthesis</keyword>
<keyword id="KW-0963">Cytoplasm</keyword>
<keyword id="KW-0238">DNA-binding</keyword>
<keyword id="KW-1185">Reference proteome</keyword>
<keyword id="KW-0678">Repressor</keyword>
<keyword id="KW-0804">Transcription</keyword>
<keyword id="KW-0805">Transcription regulation</keyword>
<protein>
    <recommendedName>
        <fullName evidence="1">Arginine repressor</fullName>
    </recommendedName>
</protein>
<feature type="chain" id="PRO_0000205059" description="Arginine repressor">
    <location>
        <begin position="1"/>
        <end position="149"/>
    </location>
</feature>
<proteinExistence type="inferred from homology"/>
<organism>
    <name type="scientific">Bacillus anthracis</name>
    <dbReference type="NCBI Taxonomy" id="1392"/>
    <lineage>
        <taxon>Bacteria</taxon>
        <taxon>Bacillati</taxon>
        <taxon>Bacillota</taxon>
        <taxon>Bacilli</taxon>
        <taxon>Bacillales</taxon>
        <taxon>Bacillaceae</taxon>
        <taxon>Bacillus</taxon>
        <taxon>Bacillus cereus group</taxon>
    </lineage>
</organism>
<name>ARGR_BACAN</name>
<accession>Q81M56</accession>
<accession>Q6HTK9</accession>
<accession>Q6KMU9</accession>
<comment type="function">
    <text evidence="1">Regulates arginine biosynthesis genes.</text>
</comment>
<comment type="pathway">
    <text>Amino-acid biosynthesis; L-arginine biosynthesis [regulation].</text>
</comment>
<comment type="subcellular location">
    <subcellularLocation>
        <location evidence="1">Cytoplasm</location>
    </subcellularLocation>
</comment>
<comment type="similarity">
    <text evidence="1">Belongs to the ArgR family.</text>
</comment>
<gene>
    <name evidence="1" type="primary">argR</name>
    <name type="ordered locus">BA_4398</name>
    <name type="ordered locus">GBAA_4398</name>
    <name type="ordered locus">BAS4079</name>
</gene>
<reference key="1">
    <citation type="journal article" date="2003" name="Nature">
        <title>The genome sequence of Bacillus anthracis Ames and comparison to closely related bacteria.</title>
        <authorList>
            <person name="Read T.D."/>
            <person name="Peterson S.N."/>
            <person name="Tourasse N.J."/>
            <person name="Baillie L.W."/>
            <person name="Paulsen I.T."/>
            <person name="Nelson K.E."/>
            <person name="Tettelin H."/>
            <person name="Fouts D.E."/>
            <person name="Eisen J.A."/>
            <person name="Gill S.R."/>
            <person name="Holtzapple E.K."/>
            <person name="Okstad O.A."/>
            <person name="Helgason E."/>
            <person name="Rilstone J."/>
            <person name="Wu M."/>
            <person name="Kolonay J.F."/>
            <person name="Beanan M.J."/>
            <person name="Dodson R.J."/>
            <person name="Brinkac L.M."/>
            <person name="Gwinn M.L."/>
            <person name="DeBoy R.T."/>
            <person name="Madpu R."/>
            <person name="Daugherty S.C."/>
            <person name="Durkin A.S."/>
            <person name="Haft D.H."/>
            <person name="Nelson W.C."/>
            <person name="Peterson J.D."/>
            <person name="Pop M."/>
            <person name="Khouri H.M."/>
            <person name="Radune D."/>
            <person name="Benton J.L."/>
            <person name="Mahamoud Y."/>
            <person name="Jiang L."/>
            <person name="Hance I.R."/>
            <person name="Weidman J.F."/>
            <person name="Berry K.J."/>
            <person name="Plaut R.D."/>
            <person name="Wolf A.M."/>
            <person name="Watkins K.L."/>
            <person name="Nierman W.C."/>
            <person name="Hazen A."/>
            <person name="Cline R.T."/>
            <person name="Redmond C."/>
            <person name="Thwaite J.E."/>
            <person name="White O."/>
            <person name="Salzberg S.L."/>
            <person name="Thomason B."/>
            <person name="Friedlander A.M."/>
            <person name="Koehler T.M."/>
            <person name="Hanna P.C."/>
            <person name="Kolstoe A.-B."/>
            <person name="Fraser C.M."/>
        </authorList>
    </citation>
    <scope>NUCLEOTIDE SEQUENCE [LARGE SCALE GENOMIC DNA]</scope>
    <source>
        <strain>Ames / isolate Porton</strain>
    </source>
</reference>
<reference key="2">
    <citation type="journal article" date="2009" name="J. Bacteriol.">
        <title>The complete genome sequence of Bacillus anthracis Ames 'Ancestor'.</title>
        <authorList>
            <person name="Ravel J."/>
            <person name="Jiang L."/>
            <person name="Stanley S.T."/>
            <person name="Wilson M.R."/>
            <person name="Decker R.S."/>
            <person name="Read T.D."/>
            <person name="Worsham P."/>
            <person name="Keim P.S."/>
            <person name="Salzberg S.L."/>
            <person name="Fraser-Liggett C.M."/>
            <person name="Rasko D.A."/>
        </authorList>
    </citation>
    <scope>NUCLEOTIDE SEQUENCE [LARGE SCALE GENOMIC DNA]</scope>
    <source>
        <strain>Ames ancestor</strain>
    </source>
</reference>
<reference key="3">
    <citation type="submission" date="2004-01" db="EMBL/GenBank/DDBJ databases">
        <title>Complete genome sequence of Bacillus anthracis Sterne.</title>
        <authorList>
            <person name="Brettin T.S."/>
            <person name="Bruce D."/>
            <person name="Challacombe J.F."/>
            <person name="Gilna P."/>
            <person name="Han C."/>
            <person name="Hill K."/>
            <person name="Hitchcock P."/>
            <person name="Jackson P."/>
            <person name="Keim P."/>
            <person name="Longmire J."/>
            <person name="Lucas S."/>
            <person name="Okinaka R."/>
            <person name="Richardson P."/>
            <person name="Rubin E."/>
            <person name="Tice H."/>
        </authorList>
    </citation>
    <scope>NUCLEOTIDE SEQUENCE [LARGE SCALE GENOMIC DNA]</scope>
    <source>
        <strain>Sterne</strain>
    </source>
</reference>
<evidence type="ECO:0000255" key="1">
    <source>
        <dbReference type="HAMAP-Rule" id="MF_00173"/>
    </source>
</evidence>
<sequence length="149" mass="16928">MNKGQRHIKIREIIANKEIETQDELVDILRNEGFNVTQATVSRDIKELHLVKVPLHDGRYKYSLPADQRFNPLQKLKRNLVDSFVKLDTAGHMLVLKTLPGNAHSLGALIDHLEWDEIIGTICGDDTCLIICRTPEDTGVVSDRFLNML</sequence>
<dbReference type="EMBL" id="AE016879">
    <property type="protein sequence ID" value="AAP28113.1"/>
    <property type="molecule type" value="Genomic_DNA"/>
</dbReference>
<dbReference type="EMBL" id="AE017334">
    <property type="protein sequence ID" value="AAT33517.1"/>
    <property type="molecule type" value="Genomic_DNA"/>
</dbReference>
<dbReference type="EMBL" id="AE017225">
    <property type="protein sequence ID" value="AAT56380.1"/>
    <property type="molecule type" value="Genomic_DNA"/>
</dbReference>
<dbReference type="RefSeq" id="NP_846627.1">
    <property type="nucleotide sequence ID" value="NC_003997.3"/>
</dbReference>
<dbReference type="RefSeq" id="WP_001032581.1">
    <property type="nucleotide sequence ID" value="NZ_WXXJ01000027.1"/>
</dbReference>
<dbReference type="RefSeq" id="YP_030329.1">
    <property type="nucleotide sequence ID" value="NC_005945.1"/>
</dbReference>
<dbReference type="SMR" id="Q81M56"/>
<dbReference type="STRING" id="261594.GBAA_4398"/>
<dbReference type="DNASU" id="1087653"/>
<dbReference type="GeneID" id="93006927"/>
<dbReference type="KEGG" id="ban:BA_4398"/>
<dbReference type="KEGG" id="bar:GBAA_4398"/>
<dbReference type="KEGG" id="bat:BAS4079"/>
<dbReference type="PATRIC" id="fig|198094.11.peg.4367"/>
<dbReference type="eggNOG" id="COG1438">
    <property type="taxonomic scope" value="Bacteria"/>
</dbReference>
<dbReference type="HOGENOM" id="CLU_097103_3_0_9"/>
<dbReference type="OMA" id="RYSMPNE"/>
<dbReference type="OrthoDB" id="9807089at2"/>
<dbReference type="UniPathway" id="UPA00068"/>
<dbReference type="Proteomes" id="UP000000427">
    <property type="component" value="Chromosome"/>
</dbReference>
<dbReference type="Proteomes" id="UP000000594">
    <property type="component" value="Chromosome"/>
</dbReference>
<dbReference type="GO" id="GO:0005737">
    <property type="term" value="C:cytoplasm"/>
    <property type="evidence" value="ECO:0007669"/>
    <property type="project" value="UniProtKB-SubCell"/>
</dbReference>
<dbReference type="GO" id="GO:0034618">
    <property type="term" value="F:arginine binding"/>
    <property type="evidence" value="ECO:0007669"/>
    <property type="project" value="InterPro"/>
</dbReference>
<dbReference type="GO" id="GO:0003677">
    <property type="term" value="F:DNA binding"/>
    <property type="evidence" value="ECO:0007669"/>
    <property type="project" value="UniProtKB-KW"/>
</dbReference>
<dbReference type="GO" id="GO:0003700">
    <property type="term" value="F:DNA-binding transcription factor activity"/>
    <property type="evidence" value="ECO:0007669"/>
    <property type="project" value="UniProtKB-UniRule"/>
</dbReference>
<dbReference type="GO" id="GO:0006526">
    <property type="term" value="P:L-arginine biosynthetic process"/>
    <property type="evidence" value="ECO:0007669"/>
    <property type="project" value="UniProtKB-UniPathway"/>
</dbReference>
<dbReference type="GO" id="GO:0051259">
    <property type="term" value="P:protein complex oligomerization"/>
    <property type="evidence" value="ECO:0007669"/>
    <property type="project" value="InterPro"/>
</dbReference>
<dbReference type="GO" id="GO:1900079">
    <property type="term" value="P:regulation of arginine biosynthetic process"/>
    <property type="evidence" value="ECO:0007669"/>
    <property type="project" value="UniProtKB-UniRule"/>
</dbReference>
<dbReference type="FunFam" id="1.10.10.10:FF:000172">
    <property type="entry name" value="Arginine repressor"/>
    <property type="match status" value="1"/>
</dbReference>
<dbReference type="FunFam" id="3.30.1360.40:FF:000006">
    <property type="entry name" value="Arginine repressor"/>
    <property type="match status" value="1"/>
</dbReference>
<dbReference type="Gene3D" id="3.30.1360.40">
    <property type="match status" value="1"/>
</dbReference>
<dbReference type="Gene3D" id="1.10.10.10">
    <property type="entry name" value="Winged helix-like DNA-binding domain superfamily/Winged helix DNA-binding domain"/>
    <property type="match status" value="1"/>
</dbReference>
<dbReference type="HAMAP" id="MF_00173">
    <property type="entry name" value="Arg_repressor"/>
    <property type="match status" value="1"/>
</dbReference>
<dbReference type="InterPro" id="IPR001669">
    <property type="entry name" value="Arg_repress"/>
</dbReference>
<dbReference type="InterPro" id="IPR020899">
    <property type="entry name" value="Arg_repress_C"/>
</dbReference>
<dbReference type="InterPro" id="IPR036251">
    <property type="entry name" value="Arg_repress_C_sf"/>
</dbReference>
<dbReference type="InterPro" id="IPR020900">
    <property type="entry name" value="Arg_repress_DNA-bd"/>
</dbReference>
<dbReference type="InterPro" id="IPR036388">
    <property type="entry name" value="WH-like_DNA-bd_sf"/>
</dbReference>
<dbReference type="InterPro" id="IPR036390">
    <property type="entry name" value="WH_DNA-bd_sf"/>
</dbReference>
<dbReference type="NCBIfam" id="TIGR01529">
    <property type="entry name" value="argR_whole"/>
    <property type="match status" value="1"/>
</dbReference>
<dbReference type="NCBIfam" id="NF003281">
    <property type="entry name" value="PRK04280.1"/>
    <property type="match status" value="1"/>
</dbReference>
<dbReference type="PANTHER" id="PTHR34471">
    <property type="entry name" value="ARGININE REPRESSOR"/>
    <property type="match status" value="1"/>
</dbReference>
<dbReference type="PANTHER" id="PTHR34471:SF1">
    <property type="entry name" value="ARGININE REPRESSOR"/>
    <property type="match status" value="1"/>
</dbReference>
<dbReference type="Pfam" id="PF01316">
    <property type="entry name" value="Arg_repressor"/>
    <property type="match status" value="1"/>
</dbReference>
<dbReference type="Pfam" id="PF02863">
    <property type="entry name" value="Arg_repressor_C"/>
    <property type="match status" value="1"/>
</dbReference>
<dbReference type="PRINTS" id="PR01467">
    <property type="entry name" value="ARGREPRESSOR"/>
</dbReference>
<dbReference type="SUPFAM" id="SSF55252">
    <property type="entry name" value="C-terminal domain of arginine repressor"/>
    <property type="match status" value="1"/>
</dbReference>
<dbReference type="SUPFAM" id="SSF46785">
    <property type="entry name" value="Winged helix' DNA-binding domain"/>
    <property type="match status" value="1"/>
</dbReference>